<comment type="function">
    <text evidence="2">Required during biogenesis of c-type cytochromes (cytochrome c6 and cytochrome f) at the step of heme attachment.</text>
</comment>
<comment type="subunit">
    <text evidence="2">May interact with Ccs1.</text>
</comment>
<comment type="subcellular location">
    <subcellularLocation>
        <location evidence="1">Plastid membrane</location>
        <topology evidence="2">Multi-pass membrane protein</topology>
    </subcellularLocation>
</comment>
<comment type="similarity">
    <text evidence="2">Belongs to the CcmF/CycK/Ccl1/NrfE/CcsA family.</text>
</comment>
<comment type="caution">
    <text evidence="3">Young tissue from this organism is photosynthetic and contains some thylakoids, although the photosynthetic activity does not exceed the light compensation point.</text>
</comment>
<proteinExistence type="inferred from homology"/>
<sequence length="308" mass="35018">MIVSTLEHILTHISLSIVSILITIELRIFLDDEIKKLYDSSERGMLITFLCITGLLANNWIYLGHFPLSDLSESLIFLSWSFALIHSIGYFTKNLKFLSTITSQSTLFTQGFATSGILTKIQKSSILIPALKSEWLIMHVSLMILGYAALLCGSLLSVALMVITVRNDGKFFFKSNNFLFREISYQNKNFFYAINYYKTQLIKELDFWSYQVISLGFIFLTIGILSGAVWANEAWGSYWSWDPKETWAFITWIVFAIYLHTRININLQSTNSAIVASLGFIIIWICYFGVNLVGLGLHSYGSFPSTSN</sequence>
<gene>
    <name evidence="2" type="primary">ccsA</name>
</gene>
<name>CCSA_CUSRE</name>
<keyword id="KW-0201">Cytochrome c-type biogenesis</keyword>
<keyword id="KW-0472">Membrane</keyword>
<keyword id="KW-0934">Plastid</keyword>
<keyword id="KW-0812">Transmembrane</keyword>
<keyword id="KW-1133">Transmembrane helix</keyword>
<reference key="1">
    <citation type="journal article" date="2007" name="BMC Plant Biol.">
        <title>Complete DNA sequences of the plastid genomes of two parasitic flowering plant species, Cuscuta reflexa and Cuscuta gronovii.</title>
        <authorList>
            <person name="Funk H.T."/>
            <person name="Berg S."/>
            <person name="Krupinska K."/>
            <person name="Maier U.-G."/>
            <person name="Krause K."/>
        </authorList>
    </citation>
    <scope>NUCLEOTIDE SEQUENCE [LARGE SCALE GENOMIC DNA]</scope>
</reference>
<protein>
    <recommendedName>
        <fullName evidence="2">Cytochrome c biogenesis protein CcsA</fullName>
    </recommendedName>
</protein>
<accession>A7M9A9</accession>
<evidence type="ECO:0000250" key="1"/>
<evidence type="ECO:0000255" key="2">
    <source>
        <dbReference type="HAMAP-Rule" id="MF_01391"/>
    </source>
</evidence>
<evidence type="ECO:0000305" key="3"/>
<organism>
    <name type="scientific">Cuscuta reflexa</name>
    <name type="common">Southern Asian dodder</name>
    <dbReference type="NCBI Taxonomy" id="4129"/>
    <lineage>
        <taxon>Eukaryota</taxon>
        <taxon>Viridiplantae</taxon>
        <taxon>Streptophyta</taxon>
        <taxon>Embryophyta</taxon>
        <taxon>Tracheophyta</taxon>
        <taxon>Spermatophyta</taxon>
        <taxon>Magnoliopsida</taxon>
        <taxon>eudicotyledons</taxon>
        <taxon>Gunneridae</taxon>
        <taxon>Pentapetalae</taxon>
        <taxon>asterids</taxon>
        <taxon>lamiids</taxon>
        <taxon>Solanales</taxon>
        <taxon>Convolvulaceae</taxon>
        <taxon>Cuscuteae</taxon>
        <taxon>Cuscuta</taxon>
        <taxon>Cuscuta subgen. Monogynella</taxon>
    </lineage>
</organism>
<geneLocation type="plastid"/>
<feature type="chain" id="PRO_0000353746" description="Cytochrome c biogenesis protein CcsA">
    <location>
        <begin position="1"/>
        <end position="308"/>
    </location>
</feature>
<feature type="transmembrane region" description="Helical" evidence="2">
    <location>
        <begin position="2"/>
        <end position="22"/>
    </location>
</feature>
<feature type="transmembrane region" description="Helical" evidence="2">
    <location>
        <begin position="44"/>
        <end position="64"/>
    </location>
</feature>
<feature type="transmembrane region" description="Helical" evidence="2">
    <location>
        <begin position="71"/>
        <end position="91"/>
    </location>
</feature>
<feature type="transmembrane region" description="Helical" evidence="2">
    <location>
        <begin position="143"/>
        <end position="163"/>
    </location>
</feature>
<feature type="transmembrane region" description="Helical" evidence="2">
    <location>
        <begin position="212"/>
        <end position="232"/>
    </location>
</feature>
<feature type="transmembrane region" description="Helical" evidence="2">
    <location>
        <begin position="247"/>
        <end position="267"/>
    </location>
</feature>
<feature type="transmembrane region" description="Helical" evidence="2">
    <location>
        <begin position="273"/>
        <end position="293"/>
    </location>
</feature>
<dbReference type="EMBL" id="AM711640">
    <property type="protein sequence ID" value="CAM98437.1"/>
    <property type="molecule type" value="Genomic_DNA"/>
</dbReference>
<dbReference type="RefSeq" id="YP_001430150.1">
    <property type="nucleotide sequence ID" value="NC_009766.1"/>
</dbReference>
<dbReference type="SMR" id="A7M9A9"/>
<dbReference type="GeneID" id="5536604"/>
<dbReference type="GO" id="GO:0005886">
    <property type="term" value="C:plasma membrane"/>
    <property type="evidence" value="ECO:0007669"/>
    <property type="project" value="TreeGrafter"/>
</dbReference>
<dbReference type="GO" id="GO:0042170">
    <property type="term" value="C:plastid membrane"/>
    <property type="evidence" value="ECO:0007669"/>
    <property type="project" value="UniProtKB-SubCell"/>
</dbReference>
<dbReference type="GO" id="GO:0042651">
    <property type="term" value="C:thylakoid membrane"/>
    <property type="evidence" value="ECO:0007669"/>
    <property type="project" value="UniProtKB-UniRule"/>
</dbReference>
<dbReference type="GO" id="GO:0020037">
    <property type="term" value="F:heme binding"/>
    <property type="evidence" value="ECO:0007669"/>
    <property type="project" value="InterPro"/>
</dbReference>
<dbReference type="GO" id="GO:0017004">
    <property type="term" value="P:cytochrome complex assembly"/>
    <property type="evidence" value="ECO:0007669"/>
    <property type="project" value="UniProtKB-UniRule"/>
</dbReference>
<dbReference type="HAMAP" id="MF_01391">
    <property type="entry name" value="CytC_CcsA"/>
    <property type="match status" value="1"/>
</dbReference>
<dbReference type="InterPro" id="IPR002541">
    <property type="entry name" value="Cyt_c_assembly"/>
</dbReference>
<dbReference type="InterPro" id="IPR017562">
    <property type="entry name" value="Cyt_c_biogenesis_CcsA"/>
</dbReference>
<dbReference type="InterPro" id="IPR045062">
    <property type="entry name" value="Cyt_c_biogenesis_CcsA/CcmC"/>
</dbReference>
<dbReference type="NCBIfam" id="TIGR03144">
    <property type="entry name" value="cytochr_II_ccsB"/>
    <property type="match status" value="1"/>
</dbReference>
<dbReference type="PANTHER" id="PTHR30071:SF1">
    <property type="entry name" value="CYTOCHROME B_B6 PROTEIN-RELATED"/>
    <property type="match status" value="1"/>
</dbReference>
<dbReference type="PANTHER" id="PTHR30071">
    <property type="entry name" value="HEME EXPORTER PROTEIN C"/>
    <property type="match status" value="1"/>
</dbReference>
<dbReference type="Pfam" id="PF01578">
    <property type="entry name" value="Cytochrom_C_asm"/>
    <property type="match status" value="1"/>
</dbReference>